<sequence length="152" mass="17015">MSEKYVVTWDMLQIHARKLAQRLLPAEQWKGIIAVSRGGLVPGALLARELGIRHVDTVCISSYDHDNQREMKVIKRAEGDGEGFIVVDDLVDTGGTAKAIRDMYPKAHFVTIFAKPAGQPLVDDYVIDIPQDTWIEQPWDMCVVFVPPLSGR</sequence>
<protein>
    <recommendedName>
        <fullName evidence="1">Xanthine-guanine phosphoribosyltransferase</fullName>
        <shortName evidence="1">XGPRT</shortName>
        <ecNumber evidence="1">2.4.2.-</ecNumber>
        <ecNumber evidence="1">2.4.2.22</ecNumber>
    </recommendedName>
    <alternativeName>
        <fullName evidence="1">Xanthine phosphoribosyltransferase</fullName>
    </alternativeName>
</protein>
<name>XGPT_PECAS</name>
<accession>Q6D1I0</accession>
<keyword id="KW-0997">Cell inner membrane</keyword>
<keyword id="KW-1003">Cell membrane</keyword>
<keyword id="KW-0328">Glycosyltransferase</keyword>
<keyword id="KW-0460">Magnesium</keyword>
<keyword id="KW-0472">Membrane</keyword>
<keyword id="KW-0479">Metal-binding</keyword>
<keyword id="KW-0660">Purine salvage</keyword>
<keyword id="KW-1185">Reference proteome</keyword>
<keyword id="KW-0808">Transferase</keyword>
<comment type="function">
    <text evidence="1">Purine salvage pathway enzyme that catalyzes the transfer of the ribosyl-5-phosphate group from 5-phospho-alpha-D-ribose 1-diphosphate (PRPP) to the N9 position of the 6-oxopurines guanine and xanthine to form the corresponding ribonucleotides GMP (guanosine 5'-monophosphate) and XMP (xanthosine 5'-monophosphate), with the release of PPi. To a lesser extent, also acts on hypoxanthine.</text>
</comment>
<comment type="catalytic activity">
    <reaction evidence="1">
        <text>GMP + diphosphate = guanine + 5-phospho-alpha-D-ribose 1-diphosphate</text>
        <dbReference type="Rhea" id="RHEA:25424"/>
        <dbReference type="ChEBI" id="CHEBI:16235"/>
        <dbReference type="ChEBI" id="CHEBI:33019"/>
        <dbReference type="ChEBI" id="CHEBI:58017"/>
        <dbReference type="ChEBI" id="CHEBI:58115"/>
    </reaction>
    <physiologicalReaction direction="right-to-left" evidence="1">
        <dbReference type="Rhea" id="RHEA:25426"/>
    </physiologicalReaction>
</comment>
<comment type="catalytic activity">
    <reaction evidence="1">
        <text>XMP + diphosphate = xanthine + 5-phospho-alpha-D-ribose 1-diphosphate</text>
        <dbReference type="Rhea" id="RHEA:10800"/>
        <dbReference type="ChEBI" id="CHEBI:17712"/>
        <dbReference type="ChEBI" id="CHEBI:33019"/>
        <dbReference type="ChEBI" id="CHEBI:57464"/>
        <dbReference type="ChEBI" id="CHEBI:58017"/>
        <dbReference type="EC" id="2.4.2.22"/>
    </reaction>
    <physiologicalReaction direction="right-to-left" evidence="1">
        <dbReference type="Rhea" id="RHEA:10802"/>
    </physiologicalReaction>
</comment>
<comment type="catalytic activity">
    <reaction evidence="1">
        <text>IMP + diphosphate = hypoxanthine + 5-phospho-alpha-D-ribose 1-diphosphate</text>
        <dbReference type="Rhea" id="RHEA:17973"/>
        <dbReference type="ChEBI" id="CHEBI:17368"/>
        <dbReference type="ChEBI" id="CHEBI:33019"/>
        <dbReference type="ChEBI" id="CHEBI:58017"/>
        <dbReference type="ChEBI" id="CHEBI:58053"/>
    </reaction>
    <physiologicalReaction direction="right-to-left" evidence="1">
        <dbReference type="Rhea" id="RHEA:17975"/>
    </physiologicalReaction>
</comment>
<comment type="cofactor">
    <cofactor evidence="1">
        <name>Mg(2+)</name>
        <dbReference type="ChEBI" id="CHEBI:18420"/>
    </cofactor>
</comment>
<comment type="pathway">
    <text evidence="1">Purine metabolism; GMP biosynthesis via salvage pathway; GMP from guanine: step 1/1.</text>
</comment>
<comment type="pathway">
    <text evidence="1">Purine metabolism; XMP biosynthesis via salvage pathway; XMP from xanthine: step 1/1.</text>
</comment>
<comment type="subunit">
    <text evidence="1">Homotetramer.</text>
</comment>
<comment type="subcellular location">
    <subcellularLocation>
        <location evidence="1">Cell inner membrane</location>
        <topology evidence="1">Peripheral membrane protein</topology>
    </subcellularLocation>
</comment>
<comment type="similarity">
    <text evidence="1">Belongs to the purine/pyrimidine phosphoribosyltransferase family. XGPT subfamily.</text>
</comment>
<reference key="1">
    <citation type="journal article" date="2004" name="Proc. Natl. Acad. Sci. U.S.A.">
        <title>Genome sequence of the enterobacterial phytopathogen Erwinia carotovora subsp. atroseptica and characterization of virulence factors.</title>
        <authorList>
            <person name="Bell K.S."/>
            <person name="Sebaihia M."/>
            <person name="Pritchard L."/>
            <person name="Holden M.T.G."/>
            <person name="Hyman L.J."/>
            <person name="Holeva M.C."/>
            <person name="Thomson N.R."/>
            <person name="Bentley S.D."/>
            <person name="Churcher L.J.C."/>
            <person name="Mungall K."/>
            <person name="Atkin R."/>
            <person name="Bason N."/>
            <person name="Brooks K."/>
            <person name="Chillingworth T."/>
            <person name="Clark K."/>
            <person name="Doggett J."/>
            <person name="Fraser A."/>
            <person name="Hance Z."/>
            <person name="Hauser H."/>
            <person name="Jagels K."/>
            <person name="Moule S."/>
            <person name="Norbertczak H."/>
            <person name="Ormond D."/>
            <person name="Price C."/>
            <person name="Quail M.A."/>
            <person name="Sanders M."/>
            <person name="Walker D."/>
            <person name="Whitehead S."/>
            <person name="Salmond G.P.C."/>
            <person name="Birch P.R.J."/>
            <person name="Parkhill J."/>
            <person name="Toth I.K."/>
        </authorList>
    </citation>
    <scope>NUCLEOTIDE SEQUENCE [LARGE SCALE GENOMIC DNA]</scope>
    <source>
        <strain>SCRI 1043 / ATCC BAA-672</strain>
    </source>
</reference>
<evidence type="ECO:0000255" key="1">
    <source>
        <dbReference type="HAMAP-Rule" id="MF_01903"/>
    </source>
</evidence>
<organism>
    <name type="scientific">Pectobacterium atrosepticum (strain SCRI 1043 / ATCC BAA-672)</name>
    <name type="common">Erwinia carotovora subsp. atroseptica</name>
    <dbReference type="NCBI Taxonomy" id="218491"/>
    <lineage>
        <taxon>Bacteria</taxon>
        <taxon>Pseudomonadati</taxon>
        <taxon>Pseudomonadota</taxon>
        <taxon>Gammaproteobacteria</taxon>
        <taxon>Enterobacterales</taxon>
        <taxon>Pectobacteriaceae</taxon>
        <taxon>Pectobacterium</taxon>
    </lineage>
</organism>
<gene>
    <name evidence="1" type="primary">gpt</name>
    <name type="ordered locus">ECA3466</name>
</gene>
<dbReference type="EC" id="2.4.2.-" evidence="1"/>
<dbReference type="EC" id="2.4.2.22" evidence="1"/>
<dbReference type="EMBL" id="BX950851">
    <property type="protein sequence ID" value="CAG76365.1"/>
    <property type="molecule type" value="Genomic_DNA"/>
</dbReference>
<dbReference type="RefSeq" id="WP_011094974.1">
    <property type="nucleotide sequence ID" value="NC_004547.2"/>
</dbReference>
<dbReference type="SMR" id="Q6D1I0"/>
<dbReference type="STRING" id="218491.ECA3466"/>
<dbReference type="GeneID" id="57210135"/>
<dbReference type="KEGG" id="eca:ECA3466"/>
<dbReference type="PATRIC" id="fig|218491.5.peg.3506"/>
<dbReference type="eggNOG" id="COG2236">
    <property type="taxonomic scope" value="Bacteria"/>
</dbReference>
<dbReference type="HOGENOM" id="CLU_080904_3_0_6"/>
<dbReference type="OrthoDB" id="9789690at2"/>
<dbReference type="UniPathway" id="UPA00602">
    <property type="reaction ID" value="UER00658"/>
</dbReference>
<dbReference type="UniPathway" id="UPA00909">
    <property type="reaction ID" value="UER00887"/>
</dbReference>
<dbReference type="Proteomes" id="UP000007966">
    <property type="component" value="Chromosome"/>
</dbReference>
<dbReference type="GO" id="GO:0005829">
    <property type="term" value="C:cytosol"/>
    <property type="evidence" value="ECO:0007669"/>
    <property type="project" value="TreeGrafter"/>
</dbReference>
<dbReference type="GO" id="GO:0005886">
    <property type="term" value="C:plasma membrane"/>
    <property type="evidence" value="ECO:0007669"/>
    <property type="project" value="UniProtKB-SubCell"/>
</dbReference>
<dbReference type="GO" id="GO:0052657">
    <property type="term" value="F:guanine phosphoribosyltransferase activity"/>
    <property type="evidence" value="ECO:0007669"/>
    <property type="project" value="RHEA"/>
</dbReference>
<dbReference type="GO" id="GO:0004422">
    <property type="term" value="F:hypoxanthine phosphoribosyltransferase activity"/>
    <property type="evidence" value="ECO:0007669"/>
    <property type="project" value="RHEA"/>
</dbReference>
<dbReference type="GO" id="GO:0000287">
    <property type="term" value="F:magnesium ion binding"/>
    <property type="evidence" value="ECO:0007669"/>
    <property type="project" value="UniProtKB-UniRule"/>
</dbReference>
<dbReference type="GO" id="GO:0000310">
    <property type="term" value="F:xanthine phosphoribosyltransferase activity"/>
    <property type="evidence" value="ECO:0007669"/>
    <property type="project" value="UniProtKB-UniRule"/>
</dbReference>
<dbReference type="GO" id="GO:0032263">
    <property type="term" value="P:GMP salvage"/>
    <property type="evidence" value="ECO:0007669"/>
    <property type="project" value="UniProtKB-UniRule"/>
</dbReference>
<dbReference type="GO" id="GO:0032264">
    <property type="term" value="P:IMP salvage"/>
    <property type="evidence" value="ECO:0007669"/>
    <property type="project" value="TreeGrafter"/>
</dbReference>
<dbReference type="GO" id="GO:0006166">
    <property type="term" value="P:purine ribonucleoside salvage"/>
    <property type="evidence" value="ECO:0007669"/>
    <property type="project" value="UniProtKB-KW"/>
</dbReference>
<dbReference type="GO" id="GO:0032265">
    <property type="term" value="P:XMP salvage"/>
    <property type="evidence" value="ECO:0007669"/>
    <property type="project" value="UniProtKB-UniRule"/>
</dbReference>
<dbReference type="CDD" id="cd06223">
    <property type="entry name" value="PRTases_typeI"/>
    <property type="match status" value="1"/>
</dbReference>
<dbReference type="FunFam" id="3.40.50.2020:FF:000009">
    <property type="entry name" value="Xanthine phosphoribosyltransferase"/>
    <property type="match status" value="1"/>
</dbReference>
<dbReference type="Gene3D" id="3.40.50.2020">
    <property type="match status" value="1"/>
</dbReference>
<dbReference type="HAMAP" id="MF_01903">
    <property type="entry name" value="XGPRT"/>
    <property type="match status" value="1"/>
</dbReference>
<dbReference type="InterPro" id="IPR000836">
    <property type="entry name" value="PRibTrfase_dom"/>
</dbReference>
<dbReference type="InterPro" id="IPR029057">
    <property type="entry name" value="PRTase-like"/>
</dbReference>
<dbReference type="InterPro" id="IPR023747">
    <property type="entry name" value="Xanthine_Guanine_PRibTrfase"/>
</dbReference>
<dbReference type="NCBIfam" id="NF006613">
    <property type="entry name" value="PRK09177.1"/>
    <property type="match status" value="1"/>
</dbReference>
<dbReference type="PANTHER" id="PTHR39563">
    <property type="entry name" value="XANTHINE PHOSPHORIBOSYLTRANSFERASE"/>
    <property type="match status" value="1"/>
</dbReference>
<dbReference type="PANTHER" id="PTHR39563:SF1">
    <property type="entry name" value="XANTHINE-GUANINE PHOSPHORIBOSYLTRANSFERASE"/>
    <property type="match status" value="1"/>
</dbReference>
<dbReference type="Pfam" id="PF00156">
    <property type="entry name" value="Pribosyltran"/>
    <property type="match status" value="1"/>
</dbReference>
<dbReference type="SUPFAM" id="SSF53271">
    <property type="entry name" value="PRTase-like"/>
    <property type="match status" value="1"/>
</dbReference>
<dbReference type="PROSITE" id="PS00103">
    <property type="entry name" value="PUR_PYR_PR_TRANSFER"/>
    <property type="match status" value="1"/>
</dbReference>
<feature type="chain" id="PRO_0000139665" description="Xanthine-guanine phosphoribosyltransferase">
    <location>
        <begin position="1"/>
        <end position="152"/>
    </location>
</feature>
<feature type="binding site" evidence="1">
    <location>
        <begin position="37"/>
        <end position="38"/>
    </location>
    <ligand>
        <name>5-phospho-alpha-D-ribose 1-diphosphate</name>
        <dbReference type="ChEBI" id="CHEBI:58017"/>
    </ligand>
</feature>
<feature type="binding site" evidence="1">
    <location>
        <position position="69"/>
    </location>
    <ligand>
        <name>5-phospho-alpha-D-ribose 1-diphosphate</name>
        <dbReference type="ChEBI" id="CHEBI:58017"/>
    </ligand>
</feature>
<feature type="binding site" evidence="1">
    <location>
        <position position="69"/>
    </location>
    <ligand>
        <name>GMP</name>
        <dbReference type="ChEBI" id="CHEBI:58115"/>
    </ligand>
</feature>
<feature type="binding site" evidence="1">
    <location>
        <begin position="88"/>
        <end position="96"/>
    </location>
    <ligand>
        <name>5-phospho-alpha-D-ribose 1-diphosphate</name>
        <dbReference type="ChEBI" id="CHEBI:58017"/>
    </ligand>
</feature>
<feature type="binding site" evidence="1">
    <location>
        <position position="89"/>
    </location>
    <ligand>
        <name>Mg(2+)</name>
        <dbReference type="ChEBI" id="CHEBI:18420"/>
    </ligand>
</feature>
<feature type="binding site" evidence="1">
    <location>
        <begin position="92"/>
        <end position="96"/>
    </location>
    <ligand>
        <name>GMP</name>
        <dbReference type="ChEBI" id="CHEBI:58115"/>
    </ligand>
</feature>
<feature type="binding site" evidence="1">
    <location>
        <position position="92"/>
    </location>
    <ligand>
        <name>guanine</name>
        <dbReference type="ChEBI" id="CHEBI:16235"/>
    </ligand>
</feature>
<feature type="binding site" evidence="1">
    <location>
        <position position="92"/>
    </location>
    <ligand>
        <name>xanthine</name>
        <dbReference type="ChEBI" id="CHEBI:17712"/>
    </ligand>
</feature>
<feature type="binding site" evidence="1">
    <location>
        <begin position="134"/>
        <end position="135"/>
    </location>
    <ligand>
        <name>GMP</name>
        <dbReference type="ChEBI" id="CHEBI:58115"/>
    </ligand>
</feature>
<feature type="binding site" evidence="1">
    <location>
        <position position="135"/>
    </location>
    <ligand>
        <name>guanine</name>
        <dbReference type="ChEBI" id="CHEBI:16235"/>
    </ligand>
</feature>
<feature type="binding site" evidence="1">
    <location>
        <position position="135"/>
    </location>
    <ligand>
        <name>xanthine</name>
        <dbReference type="ChEBI" id="CHEBI:17712"/>
    </ligand>
</feature>
<proteinExistence type="inferred from homology"/>